<gene>
    <name evidence="1" type="primary">rplY</name>
    <name type="ordered locus">VV1420</name>
</gene>
<proteinExistence type="inferred from homology"/>
<sequence>MKFEAVVRTELGKGASRRLRLAGQFPAVVYGGEAAPVAVALNHDDIVNQMDKPEFYEAITLVIGGEEVKVKPQDVQRHAFKPKVEHMDFIRI</sequence>
<evidence type="ECO:0000255" key="1">
    <source>
        <dbReference type="HAMAP-Rule" id="MF_01336"/>
    </source>
</evidence>
<evidence type="ECO:0000305" key="2"/>
<organism>
    <name type="scientific">Vibrio vulnificus (strain YJ016)</name>
    <dbReference type="NCBI Taxonomy" id="196600"/>
    <lineage>
        <taxon>Bacteria</taxon>
        <taxon>Pseudomonadati</taxon>
        <taxon>Pseudomonadota</taxon>
        <taxon>Gammaproteobacteria</taxon>
        <taxon>Vibrionales</taxon>
        <taxon>Vibrionaceae</taxon>
        <taxon>Vibrio</taxon>
    </lineage>
</organism>
<accession>Q7MLK7</accession>
<dbReference type="EMBL" id="BA000037">
    <property type="protein sequence ID" value="BAC94184.1"/>
    <property type="molecule type" value="Genomic_DNA"/>
</dbReference>
<dbReference type="RefSeq" id="WP_011080674.1">
    <property type="nucleotide sequence ID" value="NC_005139.1"/>
</dbReference>
<dbReference type="SMR" id="Q7MLK7"/>
<dbReference type="STRING" id="672.VV93_v1c13310"/>
<dbReference type="KEGG" id="vvy:VV1420"/>
<dbReference type="eggNOG" id="COG1825">
    <property type="taxonomic scope" value="Bacteria"/>
</dbReference>
<dbReference type="HOGENOM" id="CLU_137946_0_0_6"/>
<dbReference type="Proteomes" id="UP000002675">
    <property type="component" value="Chromosome I"/>
</dbReference>
<dbReference type="GO" id="GO:0022625">
    <property type="term" value="C:cytosolic large ribosomal subunit"/>
    <property type="evidence" value="ECO:0007669"/>
    <property type="project" value="TreeGrafter"/>
</dbReference>
<dbReference type="GO" id="GO:0008097">
    <property type="term" value="F:5S rRNA binding"/>
    <property type="evidence" value="ECO:0007669"/>
    <property type="project" value="InterPro"/>
</dbReference>
<dbReference type="GO" id="GO:0003735">
    <property type="term" value="F:structural constituent of ribosome"/>
    <property type="evidence" value="ECO:0007669"/>
    <property type="project" value="InterPro"/>
</dbReference>
<dbReference type="GO" id="GO:0006412">
    <property type="term" value="P:translation"/>
    <property type="evidence" value="ECO:0007669"/>
    <property type="project" value="UniProtKB-UniRule"/>
</dbReference>
<dbReference type="CDD" id="cd00495">
    <property type="entry name" value="Ribosomal_L25_TL5_CTC"/>
    <property type="match status" value="1"/>
</dbReference>
<dbReference type="FunFam" id="2.40.240.10:FF:000002">
    <property type="entry name" value="50S ribosomal protein L25"/>
    <property type="match status" value="1"/>
</dbReference>
<dbReference type="Gene3D" id="2.40.240.10">
    <property type="entry name" value="Ribosomal Protein L25, Chain P"/>
    <property type="match status" value="1"/>
</dbReference>
<dbReference type="HAMAP" id="MF_01336">
    <property type="entry name" value="Ribosomal_bL25"/>
    <property type="match status" value="1"/>
</dbReference>
<dbReference type="InterPro" id="IPR020056">
    <property type="entry name" value="Rbsml_bL25/Gln-tRNA_synth_N"/>
</dbReference>
<dbReference type="InterPro" id="IPR011035">
    <property type="entry name" value="Ribosomal_bL25/Gln-tRNA_synth"/>
</dbReference>
<dbReference type="InterPro" id="IPR020055">
    <property type="entry name" value="Ribosomal_bL25_short"/>
</dbReference>
<dbReference type="InterPro" id="IPR029751">
    <property type="entry name" value="Ribosomal_L25_dom"/>
</dbReference>
<dbReference type="InterPro" id="IPR020930">
    <property type="entry name" value="Ribosomal_uL5_bac-type"/>
</dbReference>
<dbReference type="NCBIfam" id="NF004612">
    <property type="entry name" value="PRK05943.1"/>
    <property type="match status" value="1"/>
</dbReference>
<dbReference type="PANTHER" id="PTHR33284">
    <property type="entry name" value="RIBOSOMAL PROTEIN L25/GLN-TRNA SYNTHETASE, ANTI-CODON-BINDING DOMAIN-CONTAINING PROTEIN"/>
    <property type="match status" value="1"/>
</dbReference>
<dbReference type="PANTHER" id="PTHR33284:SF1">
    <property type="entry name" value="RIBOSOMAL PROTEIN L25_GLN-TRNA SYNTHETASE, ANTI-CODON-BINDING DOMAIN-CONTAINING PROTEIN"/>
    <property type="match status" value="1"/>
</dbReference>
<dbReference type="Pfam" id="PF01386">
    <property type="entry name" value="Ribosomal_L25p"/>
    <property type="match status" value="1"/>
</dbReference>
<dbReference type="SUPFAM" id="SSF50715">
    <property type="entry name" value="Ribosomal protein L25-like"/>
    <property type="match status" value="1"/>
</dbReference>
<keyword id="KW-0687">Ribonucleoprotein</keyword>
<keyword id="KW-0689">Ribosomal protein</keyword>
<keyword id="KW-0694">RNA-binding</keyword>
<keyword id="KW-0699">rRNA-binding</keyword>
<reference key="1">
    <citation type="journal article" date="2003" name="Genome Res.">
        <title>Comparative genome analysis of Vibrio vulnificus, a marine pathogen.</title>
        <authorList>
            <person name="Chen C.-Y."/>
            <person name="Wu K.-M."/>
            <person name="Chang Y.-C."/>
            <person name="Chang C.-H."/>
            <person name="Tsai H.-C."/>
            <person name="Liao T.-L."/>
            <person name="Liu Y.-M."/>
            <person name="Chen H.-J."/>
            <person name="Shen A.B.-T."/>
            <person name="Li J.-C."/>
            <person name="Su T.-L."/>
            <person name="Shao C.-P."/>
            <person name="Lee C.-T."/>
            <person name="Hor L.-I."/>
            <person name="Tsai S.-F."/>
        </authorList>
    </citation>
    <scope>NUCLEOTIDE SEQUENCE [LARGE SCALE GENOMIC DNA]</scope>
    <source>
        <strain>YJ016</strain>
    </source>
</reference>
<feature type="chain" id="PRO_0000181502" description="Large ribosomal subunit protein bL25">
    <location>
        <begin position="1"/>
        <end position="92"/>
    </location>
</feature>
<protein>
    <recommendedName>
        <fullName evidence="1">Large ribosomal subunit protein bL25</fullName>
    </recommendedName>
    <alternativeName>
        <fullName evidence="2">50S ribosomal protein L25</fullName>
    </alternativeName>
</protein>
<comment type="function">
    <text evidence="1">This is one of the proteins that binds to the 5S RNA in the ribosome where it forms part of the central protuberance.</text>
</comment>
<comment type="subunit">
    <text evidence="1">Part of the 50S ribosomal subunit; part of the 5S rRNA/L5/L18/L25 subcomplex. Contacts the 5S rRNA. Binds to the 5S rRNA independently of L5 and L18.</text>
</comment>
<comment type="similarity">
    <text evidence="1">Belongs to the bacterial ribosomal protein bL25 family.</text>
</comment>
<name>RL25_VIBVY</name>